<organism>
    <name type="scientific">Streptococcus equi subsp. zooepidemicus (strain MGCS10565)</name>
    <dbReference type="NCBI Taxonomy" id="552526"/>
    <lineage>
        <taxon>Bacteria</taxon>
        <taxon>Bacillati</taxon>
        <taxon>Bacillota</taxon>
        <taxon>Bacilli</taxon>
        <taxon>Lactobacillales</taxon>
        <taxon>Streptococcaceae</taxon>
        <taxon>Streptococcus</taxon>
    </lineage>
</organism>
<protein>
    <recommendedName>
        <fullName evidence="1">Phenylalanine--tRNA ligase alpha subunit</fullName>
        <ecNumber evidence="1">6.1.1.20</ecNumber>
    </recommendedName>
    <alternativeName>
        <fullName evidence="1">Phenylalanyl-tRNA synthetase alpha subunit</fullName>
        <shortName evidence="1">PheRS</shortName>
    </alternativeName>
</protein>
<comment type="catalytic activity">
    <reaction evidence="1">
        <text>tRNA(Phe) + L-phenylalanine + ATP = L-phenylalanyl-tRNA(Phe) + AMP + diphosphate + H(+)</text>
        <dbReference type="Rhea" id="RHEA:19413"/>
        <dbReference type="Rhea" id="RHEA-COMP:9668"/>
        <dbReference type="Rhea" id="RHEA-COMP:9699"/>
        <dbReference type="ChEBI" id="CHEBI:15378"/>
        <dbReference type="ChEBI" id="CHEBI:30616"/>
        <dbReference type="ChEBI" id="CHEBI:33019"/>
        <dbReference type="ChEBI" id="CHEBI:58095"/>
        <dbReference type="ChEBI" id="CHEBI:78442"/>
        <dbReference type="ChEBI" id="CHEBI:78531"/>
        <dbReference type="ChEBI" id="CHEBI:456215"/>
        <dbReference type="EC" id="6.1.1.20"/>
    </reaction>
</comment>
<comment type="cofactor">
    <cofactor evidence="1">
        <name>Mg(2+)</name>
        <dbReference type="ChEBI" id="CHEBI:18420"/>
    </cofactor>
    <text evidence="1">Binds 2 magnesium ions per tetramer.</text>
</comment>
<comment type="subunit">
    <text evidence="1">Tetramer of two alpha and two beta subunits.</text>
</comment>
<comment type="subcellular location">
    <subcellularLocation>
        <location evidence="1">Cytoplasm</location>
    </subcellularLocation>
</comment>
<comment type="similarity">
    <text evidence="1">Belongs to the class-II aminoacyl-tRNA synthetase family. Phe-tRNA synthetase alpha subunit type 1 subfamily.</text>
</comment>
<feature type="chain" id="PRO_1000114918" description="Phenylalanine--tRNA ligase alpha subunit">
    <location>
        <begin position="1"/>
        <end position="347"/>
    </location>
</feature>
<feature type="binding site" evidence="1">
    <location>
        <position position="261"/>
    </location>
    <ligand>
        <name>Mg(2+)</name>
        <dbReference type="ChEBI" id="CHEBI:18420"/>
        <note>shared with beta subunit</note>
    </ligand>
</feature>
<accession>B4U2E8</accession>
<proteinExistence type="inferred from homology"/>
<sequence>MDLQAQLEELKTKTQEALKQLNGDHSKELQELRVAVLGKRGTLTELLKGLKDLSNDLRPVVGKQVNELRDFLTQAFEEQAKVVEAAKIQAKLDSESIDVTLPGRQMKQGYRHVLTQISEEIEDIFLGMGFQIVDGFEVEKDYYNFERMNLPKDHPARDMQDTFYITEDILLRTHTSPVQARTLDQHDFSKGPLKMISPGRVFRRDTDDATHSHQFHQIEGLVVGKSISMGDLKGTLEMIIKKMFGKERKIRLRPSYFPFTEPSVEVDVSCFKCGGKGCNVCKKTGWIEILGAGMVHPSVLEMSGVNAQEYSGFAFGLGQERIAMLRYGINDIRGFYQGDSRFSKQFK</sequence>
<reference key="1">
    <citation type="journal article" date="2008" name="PLoS ONE">
        <title>Genome sequence of a lancefield group C Streptococcus zooepidemicus strain causing epidemic nephritis: new information about an old disease.</title>
        <authorList>
            <person name="Beres S.B."/>
            <person name="Sesso R."/>
            <person name="Pinto S.W.L."/>
            <person name="Hoe N.P."/>
            <person name="Porcella S.F."/>
            <person name="Deleo F.R."/>
            <person name="Musser J.M."/>
        </authorList>
    </citation>
    <scope>NUCLEOTIDE SEQUENCE [LARGE SCALE GENOMIC DNA]</scope>
    <source>
        <strain>MGCS10565</strain>
    </source>
</reference>
<name>SYFA_STREM</name>
<keyword id="KW-0030">Aminoacyl-tRNA synthetase</keyword>
<keyword id="KW-0067">ATP-binding</keyword>
<keyword id="KW-0963">Cytoplasm</keyword>
<keyword id="KW-0436">Ligase</keyword>
<keyword id="KW-0460">Magnesium</keyword>
<keyword id="KW-0479">Metal-binding</keyword>
<keyword id="KW-0547">Nucleotide-binding</keyword>
<keyword id="KW-0648">Protein biosynthesis</keyword>
<dbReference type="EC" id="6.1.1.20" evidence="1"/>
<dbReference type="EMBL" id="CP001129">
    <property type="protein sequence ID" value="ACG62165.1"/>
    <property type="molecule type" value="Genomic_DNA"/>
</dbReference>
<dbReference type="RefSeq" id="WP_012515439.1">
    <property type="nucleotide sequence ID" value="NC_011134.1"/>
</dbReference>
<dbReference type="SMR" id="B4U2E8"/>
<dbReference type="KEGG" id="sez:Sez_0805"/>
<dbReference type="HOGENOM" id="CLU_025086_0_1_9"/>
<dbReference type="Proteomes" id="UP000001873">
    <property type="component" value="Chromosome"/>
</dbReference>
<dbReference type="GO" id="GO:0005737">
    <property type="term" value="C:cytoplasm"/>
    <property type="evidence" value="ECO:0007669"/>
    <property type="project" value="UniProtKB-SubCell"/>
</dbReference>
<dbReference type="GO" id="GO:0005524">
    <property type="term" value="F:ATP binding"/>
    <property type="evidence" value="ECO:0007669"/>
    <property type="project" value="UniProtKB-UniRule"/>
</dbReference>
<dbReference type="GO" id="GO:0140096">
    <property type="term" value="F:catalytic activity, acting on a protein"/>
    <property type="evidence" value="ECO:0007669"/>
    <property type="project" value="UniProtKB-ARBA"/>
</dbReference>
<dbReference type="GO" id="GO:0000287">
    <property type="term" value="F:magnesium ion binding"/>
    <property type="evidence" value="ECO:0007669"/>
    <property type="project" value="UniProtKB-UniRule"/>
</dbReference>
<dbReference type="GO" id="GO:0004826">
    <property type="term" value="F:phenylalanine-tRNA ligase activity"/>
    <property type="evidence" value="ECO:0007669"/>
    <property type="project" value="UniProtKB-UniRule"/>
</dbReference>
<dbReference type="GO" id="GO:0016740">
    <property type="term" value="F:transferase activity"/>
    <property type="evidence" value="ECO:0007669"/>
    <property type="project" value="UniProtKB-ARBA"/>
</dbReference>
<dbReference type="GO" id="GO:0000049">
    <property type="term" value="F:tRNA binding"/>
    <property type="evidence" value="ECO:0007669"/>
    <property type="project" value="InterPro"/>
</dbReference>
<dbReference type="GO" id="GO:0006432">
    <property type="term" value="P:phenylalanyl-tRNA aminoacylation"/>
    <property type="evidence" value="ECO:0007669"/>
    <property type="project" value="UniProtKB-UniRule"/>
</dbReference>
<dbReference type="CDD" id="cd00496">
    <property type="entry name" value="PheRS_alpha_core"/>
    <property type="match status" value="1"/>
</dbReference>
<dbReference type="FunFam" id="3.30.930.10:FF:000003">
    <property type="entry name" value="Phenylalanine--tRNA ligase alpha subunit"/>
    <property type="match status" value="1"/>
</dbReference>
<dbReference type="Gene3D" id="3.30.930.10">
    <property type="entry name" value="Bira Bifunctional Protein, Domain 2"/>
    <property type="match status" value="1"/>
</dbReference>
<dbReference type="HAMAP" id="MF_00281">
    <property type="entry name" value="Phe_tRNA_synth_alpha1"/>
    <property type="match status" value="1"/>
</dbReference>
<dbReference type="InterPro" id="IPR006195">
    <property type="entry name" value="aa-tRNA-synth_II"/>
</dbReference>
<dbReference type="InterPro" id="IPR045864">
    <property type="entry name" value="aa-tRNA-synth_II/BPL/LPL"/>
</dbReference>
<dbReference type="InterPro" id="IPR004529">
    <property type="entry name" value="Phe-tRNA-synth_IIc_asu"/>
</dbReference>
<dbReference type="InterPro" id="IPR004188">
    <property type="entry name" value="Phe-tRNA_ligase_II_N"/>
</dbReference>
<dbReference type="InterPro" id="IPR022911">
    <property type="entry name" value="Phe_tRNA_ligase_alpha1_bac"/>
</dbReference>
<dbReference type="InterPro" id="IPR002319">
    <property type="entry name" value="Phenylalanyl-tRNA_Synthase"/>
</dbReference>
<dbReference type="InterPro" id="IPR010978">
    <property type="entry name" value="tRNA-bd_arm"/>
</dbReference>
<dbReference type="NCBIfam" id="TIGR00468">
    <property type="entry name" value="pheS"/>
    <property type="match status" value="1"/>
</dbReference>
<dbReference type="PANTHER" id="PTHR11538:SF41">
    <property type="entry name" value="PHENYLALANINE--TRNA LIGASE, MITOCHONDRIAL"/>
    <property type="match status" value="1"/>
</dbReference>
<dbReference type="PANTHER" id="PTHR11538">
    <property type="entry name" value="PHENYLALANYL-TRNA SYNTHETASE"/>
    <property type="match status" value="1"/>
</dbReference>
<dbReference type="Pfam" id="PF02912">
    <property type="entry name" value="Phe_tRNA-synt_N"/>
    <property type="match status" value="1"/>
</dbReference>
<dbReference type="Pfam" id="PF01409">
    <property type="entry name" value="tRNA-synt_2d"/>
    <property type="match status" value="1"/>
</dbReference>
<dbReference type="SUPFAM" id="SSF55681">
    <property type="entry name" value="Class II aaRS and biotin synthetases"/>
    <property type="match status" value="1"/>
</dbReference>
<dbReference type="SUPFAM" id="SSF46589">
    <property type="entry name" value="tRNA-binding arm"/>
    <property type="match status" value="1"/>
</dbReference>
<dbReference type="PROSITE" id="PS50862">
    <property type="entry name" value="AA_TRNA_LIGASE_II"/>
    <property type="match status" value="1"/>
</dbReference>
<evidence type="ECO:0000255" key="1">
    <source>
        <dbReference type="HAMAP-Rule" id="MF_00281"/>
    </source>
</evidence>
<gene>
    <name evidence="1" type="primary">pheS</name>
    <name type="ordered locus">Sez_0805</name>
</gene>